<feature type="chain" id="PRO_0000243604" description="Glutamate-1-semialdehyde 2,1-aminomutase">
    <location>
        <begin position="1"/>
        <end position="427"/>
    </location>
</feature>
<feature type="modified residue" description="N6-(pyridoxal phosphate)lysine" evidence="1">
    <location>
        <position position="265"/>
    </location>
</feature>
<proteinExistence type="inferred from homology"/>
<organism>
    <name type="scientific">Pseudomonas fluorescens (strain Pf0-1)</name>
    <dbReference type="NCBI Taxonomy" id="205922"/>
    <lineage>
        <taxon>Bacteria</taxon>
        <taxon>Pseudomonadati</taxon>
        <taxon>Pseudomonadota</taxon>
        <taxon>Gammaproteobacteria</taxon>
        <taxon>Pseudomonadales</taxon>
        <taxon>Pseudomonadaceae</taxon>
        <taxon>Pseudomonas</taxon>
    </lineage>
</organism>
<dbReference type="EC" id="5.4.3.8" evidence="1"/>
<dbReference type="EMBL" id="CP000094">
    <property type="protein sequence ID" value="ABA76684.1"/>
    <property type="molecule type" value="Genomic_DNA"/>
</dbReference>
<dbReference type="RefSeq" id="WP_011336081.1">
    <property type="nucleotide sequence ID" value="NC_007492.2"/>
</dbReference>
<dbReference type="SMR" id="Q3K6C0"/>
<dbReference type="KEGG" id="pfo:Pfl01_4947"/>
<dbReference type="eggNOG" id="COG0001">
    <property type="taxonomic scope" value="Bacteria"/>
</dbReference>
<dbReference type="HOGENOM" id="CLU_016922_1_5_6"/>
<dbReference type="UniPathway" id="UPA00251">
    <property type="reaction ID" value="UER00317"/>
</dbReference>
<dbReference type="Proteomes" id="UP000002704">
    <property type="component" value="Chromosome"/>
</dbReference>
<dbReference type="GO" id="GO:0005737">
    <property type="term" value="C:cytoplasm"/>
    <property type="evidence" value="ECO:0007669"/>
    <property type="project" value="UniProtKB-SubCell"/>
</dbReference>
<dbReference type="GO" id="GO:0042286">
    <property type="term" value="F:glutamate-1-semialdehyde 2,1-aminomutase activity"/>
    <property type="evidence" value="ECO:0007669"/>
    <property type="project" value="UniProtKB-UniRule"/>
</dbReference>
<dbReference type="GO" id="GO:0030170">
    <property type="term" value="F:pyridoxal phosphate binding"/>
    <property type="evidence" value="ECO:0007669"/>
    <property type="project" value="InterPro"/>
</dbReference>
<dbReference type="GO" id="GO:0008483">
    <property type="term" value="F:transaminase activity"/>
    <property type="evidence" value="ECO:0007669"/>
    <property type="project" value="InterPro"/>
</dbReference>
<dbReference type="GO" id="GO:0006782">
    <property type="term" value="P:protoporphyrinogen IX biosynthetic process"/>
    <property type="evidence" value="ECO:0007669"/>
    <property type="project" value="UniProtKB-UniRule"/>
</dbReference>
<dbReference type="CDD" id="cd00610">
    <property type="entry name" value="OAT_like"/>
    <property type="match status" value="1"/>
</dbReference>
<dbReference type="FunFam" id="3.40.640.10:FF:000021">
    <property type="entry name" value="Glutamate-1-semialdehyde 2,1-aminomutase"/>
    <property type="match status" value="1"/>
</dbReference>
<dbReference type="Gene3D" id="3.90.1150.10">
    <property type="entry name" value="Aspartate Aminotransferase, domain 1"/>
    <property type="match status" value="1"/>
</dbReference>
<dbReference type="Gene3D" id="3.40.640.10">
    <property type="entry name" value="Type I PLP-dependent aspartate aminotransferase-like (Major domain)"/>
    <property type="match status" value="1"/>
</dbReference>
<dbReference type="HAMAP" id="MF_00375">
    <property type="entry name" value="HemL_aminotrans_3"/>
    <property type="match status" value="1"/>
</dbReference>
<dbReference type="InterPro" id="IPR004639">
    <property type="entry name" value="4pyrrol_synth_GluAld_NH2Trfase"/>
</dbReference>
<dbReference type="InterPro" id="IPR005814">
    <property type="entry name" value="Aminotrans_3"/>
</dbReference>
<dbReference type="InterPro" id="IPR049704">
    <property type="entry name" value="Aminotrans_3_PPA_site"/>
</dbReference>
<dbReference type="InterPro" id="IPR015424">
    <property type="entry name" value="PyrdxlP-dep_Trfase"/>
</dbReference>
<dbReference type="InterPro" id="IPR015421">
    <property type="entry name" value="PyrdxlP-dep_Trfase_major"/>
</dbReference>
<dbReference type="InterPro" id="IPR015422">
    <property type="entry name" value="PyrdxlP-dep_Trfase_small"/>
</dbReference>
<dbReference type="NCBIfam" id="TIGR00713">
    <property type="entry name" value="hemL"/>
    <property type="match status" value="1"/>
</dbReference>
<dbReference type="NCBIfam" id="NF000818">
    <property type="entry name" value="PRK00062.1"/>
    <property type="match status" value="1"/>
</dbReference>
<dbReference type="PANTHER" id="PTHR43713">
    <property type="entry name" value="GLUTAMATE-1-SEMIALDEHYDE 2,1-AMINOMUTASE"/>
    <property type="match status" value="1"/>
</dbReference>
<dbReference type="PANTHER" id="PTHR43713:SF3">
    <property type="entry name" value="GLUTAMATE-1-SEMIALDEHYDE 2,1-AMINOMUTASE 1, CHLOROPLASTIC-RELATED"/>
    <property type="match status" value="1"/>
</dbReference>
<dbReference type="Pfam" id="PF00202">
    <property type="entry name" value="Aminotran_3"/>
    <property type="match status" value="1"/>
</dbReference>
<dbReference type="SUPFAM" id="SSF53383">
    <property type="entry name" value="PLP-dependent transferases"/>
    <property type="match status" value="1"/>
</dbReference>
<dbReference type="PROSITE" id="PS00600">
    <property type="entry name" value="AA_TRANSFER_CLASS_3"/>
    <property type="match status" value="1"/>
</dbReference>
<gene>
    <name evidence="1" type="primary">hemL</name>
    <name type="ordered locus">Pfl01_4947</name>
</gene>
<accession>Q3K6C0</accession>
<keyword id="KW-0963">Cytoplasm</keyword>
<keyword id="KW-0413">Isomerase</keyword>
<keyword id="KW-0627">Porphyrin biosynthesis</keyword>
<keyword id="KW-0663">Pyridoxal phosphate</keyword>
<reference key="1">
    <citation type="journal article" date="2009" name="Genome Biol.">
        <title>Genomic and genetic analyses of diversity and plant interactions of Pseudomonas fluorescens.</title>
        <authorList>
            <person name="Silby M.W."/>
            <person name="Cerdeno-Tarraga A.M."/>
            <person name="Vernikos G.S."/>
            <person name="Giddens S.R."/>
            <person name="Jackson R.W."/>
            <person name="Preston G.M."/>
            <person name="Zhang X.-X."/>
            <person name="Moon C.D."/>
            <person name="Gehrig S.M."/>
            <person name="Godfrey S.A.C."/>
            <person name="Knight C.G."/>
            <person name="Malone J.G."/>
            <person name="Robinson Z."/>
            <person name="Spiers A.J."/>
            <person name="Harris S."/>
            <person name="Challis G.L."/>
            <person name="Yaxley A.M."/>
            <person name="Harris D."/>
            <person name="Seeger K."/>
            <person name="Murphy L."/>
            <person name="Rutter S."/>
            <person name="Squares R."/>
            <person name="Quail M.A."/>
            <person name="Saunders E."/>
            <person name="Mavromatis K."/>
            <person name="Brettin T.S."/>
            <person name="Bentley S.D."/>
            <person name="Hothersall J."/>
            <person name="Stephens E."/>
            <person name="Thomas C.M."/>
            <person name="Parkhill J."/>
            <person name="Levy S.B."/>
            <person name="Rainey P.B."/>
            <person name="Thomson N.R."/>
        </authorList>
    </citation>
    <scope>NUCLEOTIDE SEQUENCE [LARGE SCALE GENOMIC DNA]</scope>
    <source>
        <strain>Pf0-1</strain>
    </source>
</reference>
<comment type="catalytic activity">
    <reaction evidence="1">
        <text>(S)-4-amino-5-oxopentanoate = 5-aminolevulinate</text>
        <dbReference type="Rhea" id="RHEA:14265"/>
        <dbReference type="ChEBI" id="CHEBI:57501"/>
        <dbReference type="ChEBI" id="CHEBI:356416"/>
        <dbReference type="EC" id="5.4.3.8"/>
    </reaction>
</comment>
<comment type="cofactor">
    <cofactor evidence="1">
        <name>pyridoxal 5'-phosphate</name>
        <dbReference type="ChEBI" id="CHEBI:597326"/>
    </cofactor>
</comment>
<comment type="pathway">
    <text evidence="1">Porphyrin-containing compound metabolism; protoporphyrin-IX biosynthesis; 5-aminolevulinate from L-glutamyl-tRNA(Glu): step 2/2.</text>
</comment>
<comment type="subunit">
    <text evidence="1">Homodimer.</text>
</comment>
<comment type="subcellular location">
    <subcellularLocation>
        <location evidence="1">Cytoplasm</location>
    </subcellularLocation>
</comment>
<comment type="similarity">
    <text evidence="1">Belongs to the class-III pyridoxal-phosphate-dependent aminotransferase family. HemL subfamily.</text>
</comment>
<evidence type="ECO:0000255" key="1">
    <source>
        <dbReference type="HAMAP-Rule" id="MF_00375"/>
    </source>
</evidence>
<sequence>MSRSETLFANAQKHIPGGVNSPVRAFKSVGGTPLFFKHAEGAYVTDEDDKRYVDYVGSWGPMILGHSHPDVLDAVRNQLQHGLSYGAPTAMETEMADLVCSLVPSLEMVRMVSSGTEATMSAIRLARGFTGRDSIIKFEGCYHGHSDSLLVKAGSGALTQGVPSSAGVPAAFAKHTLTLPFNDIDAVEKMLAEVGQDVACIIVEPVAGNMNCVPPAPGFLEGLRSLCDKHGVVLIFDEVMTGFRVALGGAQAYYGVTPDLTTFGKIIGGGMPVGCFGGKRLIMERIAPLGPVYQAGTLSGNPLAMAAGLTTLRLISRPGFHAELTDYTTRLLDGLQQRADAAGIPFVTTQAGGMFGLYFSGADDIVTFEDVMASDAALFGRFFHLMLEGGVYLAPSAFEAGFTSIAHGEAELKLTLDAAERAFAKLK</sequence>
<name>GSA_PSEPF</name>
<protein>
    <recommendedName>
        <fullName evidence="1">Glutamate-1-semialdehyde 2,1-aminomutase</fullName>
        <shortName evidence="1">GSA</shortName>
        <ecNumber evidence="1">5.4.3.8</ecNumber>
    </recommendedName>
    <alternativeName>
        <fullName evidence="1">Glutamate-1-semialdehyde aminotransferase</fullName>
        <shortName evidence="1">GSA-AT</shortName>
    </alternativeName>
</protein>